<comment type="function">
    <text evidence="1">Catalyzes the ATP-dependent amidation of deamido-NAD to form NAD. Uses ammonia as a nitrogen source.</text>
</comment>
<comment type="catalytic activity">
    <reaction evidence="1">
        <text>deamido-NAD(+) + NH4(+) + ATP = AMP + diphosphate + NAD(+) + H(+)</text>
        <dbReference type="Rhea" id="RHEA:21188"/>
        <dbReference type="ChEBI" id="CHEBI:15378"/>
        <dbReference type="ChEBI" id="CHEBI:28938"/>
        <dbReference type="ChEBI" id="CHEBI:30616"/>
        <dbReference type="ChEBI" id="CHEBI:33019"/>
        <dbReference type="ChEBI" id="CHEBI:57540"/>
        <dbReference type="ChEBI" id="CHEBI:58437"/>
        <dbReference type="ChEBI" id="CHEBI:456215"/>
        <dbReference type="EC" id="6.3.1.5"/>
    </reaction>
</comment>
<comment type="pathway">
    <text evidence="1">Cofactor biosynthesis; NAD(+) biosynthesis; NAD(+) from deamido-NAD(+) (ammonia route): step 1/1.</text>
</comment>
<comment type="subunit">
    <text evidence="1">Homodimer.</text>
</comment>
<comment type="similarity">
    <text evidence="1">Belongs to the NAD synthetase family.</text>
</comment>
<evidence type="ECO:0000255" key="1">
    <source>
        <dbReference type="HAMAP-Rule" id="MF_00193"/>
    </source>
</evidence>
<sequence length="260" mass="29242">MQKDYQKLIAYLCDFLEKEVQKKGFKKVVYGLSGGLDSAVVGVLCQKVFKENAHALLMPSSASMPESKTDALNLCEMFSIPYTEYSIAPYDKIFGFHFKDASLTRKGNFCARLRMAFLYDYSLKSDSLVIGTSNKSERMLGYGTLFGDLACAINPIGELFKTEVYELARHLNIPKKILNKPPSADLFVGQSDEKDLGYPYSVIDPLLKDIEALFKNKPIDAEALTQLGYDEILVKNITSRIQKNAFKLELPTIAKRFNPE</sequence>
<protein>
    <recommendedName>
        <fullName evidence="1">NH(3)-dependent NAD(+) synthetase</fullName>
        <ecNumber evidence="1">6.3.1.5</ecNumber>
    </recommendedName>
</protein>
<organism>
    <name type="scientific">Helicobacter pylori (strain P12)</name>
    <dbReference type="NCBI Taxonomy" id="570508"/>
    <lineage>
        <taxon>Bacteria</taxon>
        <taxon>Pseudomonadati</taxon>
        <taxon>Campylobacterota</taxon>
        <taxon>Epsilonproteobacteria</taxon>
        <taxon>Campylobacterales</taxon>
        <taxon>Helicobacteraceae</taxon>
        <taxon>Helicobacter</taxon>
    </lineage>
</organism>
<reference key="1">
    <citation type="submission" date="2008-10" db="EMBL/GenBank/DDBJ databases">
        <title>The complete genome sequence of Helicobacter pylori strain P12.</title>
        <authorList>
            <person name="Fischer W."/>
            <person name="Windhager L."/>
            <person name="Karnholz A."/>
            <person name="Zeiller M."/>
            <person name="Zimmer R."/>
            <person name="Haas R."/>
        </authorList>
    </citation>
    <scope>NUCLEOTIDE SEQUENCE [LARGE SCALE GENOMIC DNA]</scope>
    <source>
        <strain>P12</strain>
    </source>
</reference>
<accession>B6JKQ6</accession>
<proteinExistence type="inferred from homology"/>
<keyword id="KW-0067">ATP-binding</keyword>
<keyword id="KW-0436">Ligase</keyword>
<keyword id="KW-0460">Magnesium</keyword>
<keyword id="KW-0479">Metal-binding</keyword>
<keyword id="KW-0520">NAD</keyword>
<keyword id="KW-0547">Nucleotide-binding</keyword>
<gene>
    <name evidence="1" type="primary">nadE</name>
    <name type="ordered locus">HPP12_0327</name>
</gene>
<name>NADE_HELP2</name>
<feature type="chain" id="PRO_1000099025" description="NH(3)-dependent NAD(+) synthetase">
    <location>
        <begin position="1"/>
        <end position="260"/>
    </location>
</feature>
<feature type="binding site" evidence="1">
    <location>
        <begin position="31"/>
        <end position="38"/>
    </location>
    <ligand>
        <name>ATP</name>
        <dbReference type="ChEBI" id="CHEBI:30616"/>
    </ligand>
</feature>
<feature type="binding site" evidence="1">
    <location>
        <position position="37"/>
    </location>
    <ligand>
        <name>Mg(2+)</name>
        <dbReference type="ChEBI" id="CHEBI:18420"/>
    </ligand>
</feature>
<feature type="binding site" evidence="1">
    <location>
        <position position="112"/>
    </location>
    <ligand>
        <name>deamido-NAD(+)</name>
        <dbReference type="ChEBI" id="CHEBI:58437"/>
    </ligand>
</feature>
<feature type="binding site" evidence="1">
    <location>
        <position position="132"/>
    </location>
    <ligand>
        <name>ATP</name>
        <dbReference type="ChEBI" id="CHEBI:30616"/>
    </ligand>
</feature>
<feature type="binding site" evidence="1">
    <location>
        <position position="137"/>
    </location>
    <ligand>
        <name>Mg(2+)</name>
        <dbReference type="ChEBI" id="CHEBI:18420"/>
    </ligand>
</feature>
<feature type="binding site" evidence="1">
    <location>
        <position position="161"/>
    </location>
    <ligand>
        <name>ATP</name>
        <dbReference type="ChEBI" id="CHEBI:30616"/>
    </ligand>
</feature>
<feature type="binding site" evidence="1">
    <location>
        <position position="183"/>
    </location>
    <ligand>
        <name>ATP</name>
        <dbReference type="ChEBI" id="CHEBI:30616"/>
    </ligand>
</feature>
<dbReference type="EC" id="6.3.1.5" evidence="1"/>
<dbReference type="EMBL" id="CP001217">
    <property type="protein sequence ID" value="ACJ07484.1"/>
    <property type="molecule type" value="Genomic_DNA"/>
</dbReference>
<dbReference type="SMR" id="B6JKQ6"/>
<dbReference type="KEGG" id="hpp:HPP12_0327"/>
<dbReference type="HOGENOM" id="CLU_059327_1_2_7"/>
<dbReference type="UniPathway" id="UPA00253">
    <property type="reaction ID" value="UER00333"/>
</dbReference>
<dbReference type="Proteomes" id="UP000008198">
    <property type="component" value="Chromosome"/>
</dbReference>
<dbReference type="GO" id="GO:0005737">
    <property type="term" value="C:cytoplasm"/>
    <property type="evidence" value="ECO:0007669"/>
    <property type="project" value="InterPro"/>
</dbReference>
<dbReference type="GO" id="GO:0005524">
    <property type="term" value="F:ATP binding"/>
    <property type="evidence" value="ECO:0007669"/>
    <property type="project" value="UniProtKB-UniRule"/>
</dbReference>
<dbReference type="GO" id="GO:0004359">
    <property type="term" value="F:glutaminase activity"/>
    <property type="evidence" value="ECO:0007669"/>
    <property type="project" value="InterPro"/>
</dbReference>
<dbReference type="GO" id="GO:0046872">
    <property type="term" value="F:metal ion binding"/>
    <property type="evidence" value="ECO:0007669"/>
    <property type="project" value="UniProtKB-KW"/>
</dbReference>
<dbReference type="GO" id="GO:0003952">
    <property type="term" value="F:NAD+ synthase (glutamine-hydrolyzing) activity"/>
    <property type="evidence" value="ECO:0007669"/>
    <property type="project" value="InterPro"/>
</dbReference>
<dbReference type="GO" id="GO:0008795">
    <property type="term" value="F:NAD+ synthase activity"/>
    <property type="evidence" value="ECO:0007669"/>
    <property type="project" value="UniProtKB-UniRule"/>
</dbReference>
<dbReference type="GO" id="GO:0009435">
    <property type="term" value="P:NAD biosynthetic process"/>
    <property type="evidence" value="ECO:0007669"/>
    <property type="project" value="UniProtKB-UniRule"/>
</dbReference>
<dbReference type="CDD" id="cd00553">
    <property type="entry name" value="NAD_synthase"/>
    <property type="match status" value="1"/>
</dbReference>
<dbReference type="FunFam" id="3.40.50.620:FF:000106">
    <property type="entry name" value="Glutamine-dependent NAD(+) synthetase"/>
    <property type="match status" value="1"/>
</dbReference>
<dbReference type="Gene3D" id="3.40.50.620">
    <property type="entry name" value="HUPs"/>
    <property type="match status" value="1"/>
</dbReference>
<dbReference type="HAMAP" id="MF_00193">
    <property type="entry name" value="NadE_ammonia_dep"/>
    <property type="match status" value="1"/>
</dbReference>
<dbReference type="InterPro" id="IPR022310">
    <property type="entry name" value="NAD/GMP_synthase"/>
</dbReference>
<dbReference type="InterPro" id="IPR003694">
    <property type="entry name" value="NAD_synthase"/>
</dbReference>
<dbReference type="InterPro" id="IPR022926">
    <property type="entry name" value="NH(3)-dep_NAD(+)_synth"/>
</dbReference>
<dbReference type="InterPro" id="IPR014729">
    <property type="entry name" value="Rossmann-like_a/b/a_fold"/>
</dbReference>
<dbReference type="NCBIfam" id="TIGR00552">
    <property type="entry name" value="nadE"/>
    <property type="match status" value="1"/>
</dbReference>
<dbReference type="NCBIfam" id="NF010587">
    <property type="entry name" value="PRK13980.1"/>
    <property type="match status" value="1"/>
</dbReference>
<dbReference type="PANTHER" id="PTHR23090:SF9">
    <property type="entry name" value="GLUTAMINE-DEPENDENT NAD(+) SYNTHETASE"/>
    <property type="match status" value="1"/>
</dbReference>
<dbReference type="PANTHER" id="PTHR23090">
    <property type="entry name" value="NH 3 /GLUTAMINE-DEPENDENT NAD + SYNTHETASE"/>
    <property type="match status" value="1"/>
</dbReference>
<dbReference type="Pfam" id="PF02540">
    <property type="entry name" value="NAD_synthase"/>
    <property type="match status" value="1"/>
</dbReference>
<dbReference type="SUPFAM" id="SSF52402">
    <property type="entry name" value="Adenine nucleotide alpha hydrolases-like"/>
    <property type="match status" value="1"/>
</dbReference>